<keyword id="KW-0175">Coiled coil</keyword>
<keyword id="KW-0238">DNA-binding</keyword>
<keyword id="KW-0539">Nucleus</keyword>
<keyword id="KW-0597">Phosphoprotein</keyword>
<keyword id="KW-1185">Reference proteome</keyword>
<keyword id="KW-0346">Stress response</keyword>
<keyword id="KW-0804">Transcription</keyword>
<keyword id="KW-0805">Transcription regulation</keyword>
<reference key="1">
    <citation type="submission" date="2003-07" db="EMBL/GenBank/DDBJ databases">
        <title>Isolation rice heat shock factor by modified yeast one-hybrid system method.</title>
        <authorList>
            <person name="Yao Q.-H."/>
            <person name="Peng R.-H."/>
            <person name="Xiong A.-S."/>
        </authorList>
    </citation>
    <scope>NUCLEOTIDE SEQUENCE [MRNA]</scope>
</reference>
<reference key="2">
    <citation type="journal article" date="2005" name="Genome Res.">
        <title>Sequence, annotation, and analysis of synteny between rice chromosome 3 and diverged grass species.</title>
        <authorList>
            <consortium name="The rice chromosome 3 sequencing consortium"/>
            <person name="Buell C.R."/>
            <person name="Yuan Q."/>
            <person name="Ouyang S."/>
            <person name="Liu J."/>
            <person name="Zhu W."/>
            <person name="Wang A."/>
            <person name="Maiti R."/>
            <person name="Haas B."/>
            <person name="Wortman J."/>
            <person name="Pertea M."/>
            <person name="Jones K.M."/>
            <person name="Kim M."/>
            <person name="Overton L."/>
            <person name="Tsitrin T."/>
            <person name="Fadrosh D."/>
            <person name="Bera J."/>
            <person name="Weaver B."/>
            <person name="Jin S."/>
            <person name="Johri S."/>
            <person name="Reardon M."/>
            <person name="Webb K."/>
            <person name="Hill J."/>
            <person name="Moffat K."/>
            <person name="Tallon L."/>
            <person name="Van Aken S."/>
            <person name="Lewis M."/>
            <person name="Utterback T."/>
            <person name="Feldblyum T."/>
            <person name="Zismann V."/>
            <person name="Iobst S."/>
            <person name="Hsiao J."/>
            <person name="de Vazeille A.R."/>
            <person name="Salzberg S.L."/>
            <person name="White O."/>
            <person name="Fraser C.M."/>
            <person name="Yu Y."/>
            <person name="Kim H."/>
            <person name="Rambo T."/>
            <person name="Currie J."/>
            <person name="Collura K."/>
            <person name="Kernodle-Thompson S."/>
            <person name="Wei F."/>
            <person name="Kudrna K."/>
            <person name="Ammiraju J.S.S."/>
            <person name="Luo M."/>
            <person name="Goicoechea J.L."/>
            <person name="Wing R.A."/>
            <person name="Henry D."/>
            <person name="Oates R."/>
            <person name="Palmer M."/>
            <person name="Pries G."/>
            <person name="Saski C."/>
            <person name="Simmons J."/>
            <person name="Soderlund C."/>
            <person name="Nelson W."/>
            <person name="de la Bastide M."/>
            <person name="Spiegel L."/>
            <person name="Nascimento L."/>
            <person name="Huang E."/>
            <person name="Preston R."/>
            <person name="Zutavern T."/>
            <person name="Palmer L."/>
            <person name="O'Shaughnessy A."/>
            <person name="Dike S."/>
            <person name="McCombie W.R."/>
            <person name="Minx P."/>
            <person name="Cordum H."/>
            <person name="Wilson R."/>
            <person name="Jin W."/>
            <person name="Lee H.R."/>
            <person name="Jiang J."/>
            <person name="Jackson S."/>
        </authorList>
    </citation>
    <scope>NUCLEOTIDE SEQUENCE [LARGE SCALE GENOMIC DNA]</scope>
    <source>
        <strain>cv. Nipponbare</strain>
    </source>
</reference>
<reference key="3">
    <citation type="journal article" date="2005" name="Nature">
        <title>The map-based sequence of the rice genome.</title>
        <authorList>
            <consortium name="International rice genome sequencing project (IRGSP)"/>
        </authorList>
    </citation>
    <scope>NUCLEOTIDE SEQUENCE [LARGE SCALE GENOMIC DNA]</scope>
    <source>
        <strain>cv. Nipponbare</strain>
    </source>
</reference>
<reference key="4">
    <citation type="journal article" date="2008" name="Nucleic Acids Res.">
        <title>The rice annotation project database (RAP-DB): 2008 update.</title>
        <authorList>
            <consortium name="The rice annotation project (RAP)"/>
        </authorList>
    </citation>
    <scope>GENOME REANNOTATION</scope>
    <source>
        <strain>cv. Nipponbare</strain>
    </source>
</reference>
<reference key="5">
    <citation type="journal article" date="2013" name="Rice">
        <title>Improvement of the Oryza sativa Nipponbare reference genome using next generation sequence and optical map data.</title>
        <authorList>
            <person name="Kawahara Y."/>
            <person name="de la Bastide M."/>
            <person name="Hamilton J.P."/>
            <person name="Kanamori H."/>
            <person name="McCombie W.R."/>
            <person name="Ouyang S."/>
            <person name="Schwartz D.C."/>
            <person name="Tanaka T."/>
            <person name="Wu J."/>
            <person name="Zhou S."/>
            <person name="Childs K.L."/>
            <person name="Davidson R.M."/>
            <person name="Lin H."/>
            <person name="Quesada-Ocampo L."/>
            <person name="Vaillancourt B."/>
            <person name="Sakai H."/>
            <person name="Lee S.S."/>
            <person name="Kim J."/>
            <person name="Numa H."/>
            <person name="Itoh T."/>
            <person name="Buell C.R."/>
            <person name="Matsumoto T."/>
        </authorList>
    </citation>
    <scope>GENOME REANNOTATION</scope>
    <source>
        <strain>cv. Nipponbare</strain>
    </source>
</reference>
<reference key="6">
    <citation type="journal article" date="2004" name="J. Biosci.">
        <title>Heat stress response in plants: a complex game with chaperones and more than twenty heat stress transcription factors.</title>
        <authorList>
            <person name="Baniwal S.K."/>
            <person name="Bharti K."/>
            <person name="Chan K.Y."/>
            <person name="Fauth M."/>
            <person name="Ganguli A."/>
            <person name="Kotak S."/>
            <person name="Mishra S.K."/>
            <person name="Nover L."/>
            <person name="Port M."/>
            <person name="Scharf K.-D."/>
            <person name="Tripp J."/>
            <person name="Weber C."/>
            <person name="Zielinski D."/>
            <person name="von Koskull-Doering P."/>
        </authorList>
    </citation>
    <scope>GENE FAMILY</scope>
    <scope>NOMENCLATURE</scope>
</reference>
<reference key="7">
    <citation type="journal article" date="2008" name="J. Genet. Genomics">
        <title>Genome-wide analysis of heat shock transcription factor families in rice and Arabidopsis.</title>
        <authorList>
            <person name="Guo J."/>
            <person name="Wu J."/>
            <person name="Ji Q."/>
            <person name="Wang C."/>
            <person name="Luo L."/>
            <person name="Yuan Y."/>
            <person name="Wang Y."/>
            <person name="Wang J."/>
        </authorList>
    </citation>
    <scope>GENE FAMILY</scope>
    <scope>NOMENCLATURE</scope>
    <scope>DOMAIN AHA</scope>
</reference>
<reference key="8">
    <citation type="journal article" date="2008" name="Planta">
        <title>Expression of rice heat stress transcription factor OsHsfA2e enhances tolerance to environmental stresses in transgenic Arabidopsis.</title>
        <authorList>
            <person name="Yokotani N."/>
            <person name="Ichikawa T."/>
            <person name="Kondou Y."/>
            <person name="Matsui M."/>
            <person name="Hirochika H."/>
            <person name="Iwabuchi M."/>
            <person name="Oda K."/>
        </authorList>
    </citation>
    <scope>INDUCTION</scope>
</reference>
<organism>
    <name type="scientific">Oryza sativa subsp. japonica</name>
    <name type="common">Rice</name>
    <dbReference type="NCBI Taxonomy" id="39947"/>
    <lineage>
        <taxon>Eukaryota</taxon>
        <taxon>Viridiplantae</taxon>
        <taxon>Streptophyta</taxon>
        <taxon>Embryophyta</taxon>
        <taxon>Tracheophyta</taxon>
        <taxon>Spermatophyta</taxon>
        <taxon>Magnoliopsida</taxon>
        <taxon>Liliopsida</taxon>
        <taxon>Poales</taxon>
        <taxon>Poaceae</taxon>
        <taxon>BOP clade</taxon>
        <taxon>Oryzoideae</taxon>
        <taxon>Oryzeae</taxon>
        <taxon>Oryzinae</taxon>
        <taxon>Oryza</taxon>
        <taxon>Oryza sativa</taxon>
    </lineage>
</organism>
<sequence length="506" mass="55277">MEAAVAAAAAAAGAVTTAVAPPPGAAVSNGVATAPPPFLMKTYEMVDDPATDAVVSWGPGNNSFVVWNTPEFARDLLPKYFKHSNFSSFVRQLNTYGFRKVDPDRWEFANEGFLRGQKHLLKTINRRKPTHGNNQVQQPQLPAAPVPACVEVGKFGMEEEIEMLKRDKNVLMQELVRLRQQQQTTDHQLQTLGKRLQGMEQRQQQMMSFLAKAMHSPGFLAQFVQQNENSRRRIVASNKKRRLPKQDGSLDSESASLDGQIVKYQPMINEAAKAMLRKILKLDSSHRFESMGNSDNFLLENYMPNGQGLDSSSSTRNSGVTLAEVPANSGLPYVATSSGLSAICSTSTPQIQCPVVLDNGIPKEVPNMSAVPSVPKAVAPGPTDINILEFPDLQDIVAEENVDIPGGGFEMPGPEGVFSLPEEGDDSVPIETDEILYNDDTQKLPAIIDSFWEQFLVASPLSVDNDEVDSGVLDQKETQQGNGWTKAENMANLTEQMGLLSSHHTG</sequence>
<comment type="function">
    <text evidence="1">Transcriptional regulator that specifically binds DNA of heat shock promoter elements (HSE).</text>
</comment>
<comment type="subunit">
    <text evidence="1">Homotrimer.</text>
</comment>
<comment type="subcellular location">
    <subcellularLocation>
        <location evidence="6">Nucleus</location>
    </subcellularLocation>
</comment>
<comment type="induction">
    <text evidence="4">Not induced by heat stress.</text>
</comment>
<comment type="domain">
    <text evidence="5">The hydrophobic-rich region (HR-A/B) corresponds to the oligomerization domain. AHA motifs are transcriptional activator elements.</text>
</comment>
<comment type="PTM">
    <text evidence="1">Exhibits temperature-dependent phosphorylation.</text>
</comment>
<comment type="similarity">
    <text evidence="6">Belongs to the HSF family. Class A subfamily.</text>
</comment>
<proteinExistence type="evidence at transcript level"/>
<accession>Q84T61</accession>
<gene>
    <name type="primary">HSFA1</name>
    <name type="synonym">HSF13</name>
    <name type="synonym">HSF3</name>
    <name type="ordered locus">Os03g0854500</name>
    <name type="ordered locus">LOC_Os03g63750</name>
</gene>
<feature type="chain" id="PRO_0000350820" description="Heat stress transcription factor A-1">
    <location>
        <begin position="1"/>
        <end position="506"/>
    </location>
</feature>
<feature type="region of interest" description="Hydrophobic repeat HR-A/B">
    <location>
        <begin position="164"/>
        <end position="214"/>
    </location>
</feature>
<feature type="region of interest" description="Disordered" evidence="3">
    <location>
        <begin position="231"/>
        <end position="254"/>
    </location>
</feature>
<feature type="coiled-coil region" evidence="2">
    <location>
        <begin position="157"/>
        <end position="207"/>
    </location>
</feature>
<feature type="short sequence motif" description="Nuclear localization signal" evidence="2">
    <location>
        <begin position="239"/>
        <end position="242"/>
    </location>
</feature>
<feature type="short sequence motif" description="AHA">
    <location>
        <begin position="449"/>
        <end position="456"/>
    </location>
</feature>
<feature type="compositionally biased region" description="Basic residues" evidence="3">
    <location>
        <begin position="232"/>
        <end position="243"/>
    </location>
</feature>
<protein>
    <recommendedName>
        <fullName>Heat stress transcription factor A-1</fullName>
    </recommendedName>
    <alternativeName>
        <fullName>Heat stress transcription factor 13</fullName>
        <shortName>OsHsf-13</shortName>
    </alternativeName>
    <alternativeName>
        <fullName>Heat stress transcription factor 3</fullName>
        <shortName>rHsf3</shortName>
    </alternativeName>
</protein>
<name>HSFA1_ORYSJ</name>
<dbReference type="EMBL" id="AY344485">
    <property type="protein sequence ID" value="AAQ23057.1"/>
    <property type="molecule type" value="mRNA"/>
</dbReference>
<dbReference type="EMBL" id="AC120506">
    <property type="protein sequence ID" value="AAO66547.1"/>
    <property type="molecule type" value="Genomic_DNA"/>
</dbReference>
<dbReference type="EMBL" id="DP000009">
    <property type="protein sequence ID" value="ABF99963.1"/>
    <property type="molecule type" value="Genomic_DNA"/>
</dbReference>
<dbReference type="EMBL" id="AP008209">
    <property type="protein sequence ID" value="BAF13852.1"/>
    <property type="molecule type" value="Genomic_DNA"/>
</dbReference>
<dbReference type="EMBL" id="AP014959">
    <property type="protein sequence ID" value="BAS87428.1"/>
    <property type="molecule type" value="Genomic_DNA"/>
</dbReference>
<dbReference type="RefSeq" id="XP_015630421.1">
    <property type="nucleotide sequence ID" value="XM_015774935.1"/>
</dbReference>
<dbReference type="SMR" id="Q84T61"/>
<dbReference type="FunCoup" id="Q84T61">
    <property type="interactions" value="213"/>
</dbReference>
<dbReference type="STRING" id="39947.Q84T61"/>
<dbReference type="PaxDb" id="39947-Q84T61"/>
<dbReference type="EnsemblPlants" id="Os03t0854500-01">
    <property type="protein sequence ID" value="Os03t0854500-01"/>
    <property type="gene ID" value="Os03g0854500"/>
</dbReference>
<dbReference type="EnsemblPlants" id="Os03t0854500-02">
    <property type="protein sequence ID" value="Os03t0854500-02"/>
    <property type="gene ID" value="Os03g0854500"/>
</dbReference>
<dbReference type="Gramene" id="Os03t0854500-01">
    <property type="protein sequence ID" value="Os03t0854500-01"/>
    <property type="gene ID" value="Os03g0854500"/>
</dbReference>
<dbReference type="Gramene" id="Os03t0854500-02">
    <property type="protein sequence ID" value="Os03t0854500-02"/>
    <property type="gene ID" value="Os03g0854500"/>
</dbReference>
<dbReference type="KEGG" id="dosa:Os03g0854500"/>
<dbReference type="eggNOG" id="KOG0627">
    <property type="taxonomic scope" value="Eukaryota"/>
</dbReference>
<dbReference type="HOGENOM" id="CLU_030308_0_0_1"/>
<dbReference type="InParanoid" id="Q84T61"/>
<dbReference type="OMA" id="VENFTMP"/>
<dbReference type="OrthoDB" id="60033at2759"/>
<dbReference type="Proteomes" id="UP000000763">
    <property type="component" value="Chromosome 3"/>
</dbReference>
<dbReference type="Proteomes" id="UP000059680">
    <property type="component" value="Chromosome 3"/>
</dbReference>
<dbReference type="ExpressionAtlas" id="Q84T61">
    <property type="expression patterns" value="baseline and differential"/>
</dbReference>
<dbReference type="GO" id="GO:0005634">
    <property type="term" value="C:nucleus"/>
    <property type="evidence" value="ECO:0000318"/>
    <property type="project" value="GO_Central"/>
</dbReference>
<dbReference type="GO" id="GO:0003700">
    <property type="term" value="F:DNA-binding transcription factor activity"/>
    <property type="evidence" value="ECO:0000318"/>
    <property type="project" value="GO_Central"/>
</dbReference>
<dbReference type="GO" id="GO:0043565">
    <property type="term" value="F:sequence-specific DNA binding"/>
    <property type="evidence" value="ECO:0007669"/>
    <property type="project" value="InterPro"/>
</dbReference>
<dbReference type="GO" id="GO:0034605">
    <property type="term" value="P:cellular response to heat"/>
    <property type="evidence" value="ECO:0000318"/>
    <property type="project" value="GO_Central"/>
</dbReference>
<dbReference type="GO" id="GO:0006357">
    <property type="term" value="P:regulation of transcription by RNA polymerase II"/>
    <property type="evidence" value="ECO:0000318"/>
    <property type="project" value="GO_Central"/>
</dbReference>
<dbReference type="FunFam" id="1.10.10.10:FF:000057">
    <property type="entry name" value="Heat shock transcription factor 1"/>
    <property type="match status" value="1"/>
</dbReference>
<dbReference type="Gene3D" id="1.10.10.10">
    <property type="entry name" value="Winged helix-like DNA-binding domain superfamily/Winged helix DNA-binding domain"/>
    <property type="match status" value="1"/>
</dbReference>
<dbReference type="InterPro" id="IPR000232">
    <property type="entry name" value="HSF_DNA-bd"/>
</dbReference>
<dbReference type="InterPro" id="IPR036388">
    <property type="entry name" value="WH-like_DNA-bd_sf"/>
</dbReference>
<dbReference type="InterPro" id="IPR036390">
    <property type="entry name" value="WH_DNA-bd_sf"/>
</dbReference>
<dbReference type="PANTHER" id="PTHR10015:SF427">
    <property type="entry name" value="HEAT SHOCK FACTOR PROTEIN"/>
    <property type="match status" value="1"/>
</dbReference>
<dbReference type="PANTHER" id="PTHR10015">
    <property type="entry name" value="HEAT SHOCK TRANSCRIPTION FACTOR"/>
    <property type="match status" value="1"/>
</dbReference>
<dbReference type="Pfam" id="PF00447">
    <property type="entry name" value="HSF_DNA-bind"/>
    <property type="match status" value="1"/>
</dbReference>
<dbReference type="PRINTS" id="PR00056">
    <property type="entry name" value="HSFDOMAIN"/>
</dbReference>
<dbReference type="SMART" id="SM00415">
    <property type="entry name" value="HSF"/>
    <property type="match status" value="1"/>
</dbReference>
<dbReference type="SUPFAM" id="SSF46785">
    <property type="entry name" value="Winged helix' DNA-binding domain"/>
    <property type="match status" value="1"/>
</dbReference>
<dbReference type="PROSITE" id="PS00434">
    <property type="entry name" value="HSF_DOMAIN"/>
    <property type="match status" value="1"/>
</dbReference>
<evidence type="ECO:0000250" key="1"/>
<evidence type="ECO:0000255" key="2"/>
<evidence type="ECO:0000256" key="3">
    <source>
        <dbReference type="SAM" id="MobiDB-lite"/>
    </source>
</evidence>
<evidence type="ECO:0000269" key="4">
    <source>
    </source>
</evidence>
<evidence type="ECO:0000269" key="5">
    <source>
    </source>
</evidence>
<evidence type="ECO:0000305" key="6"/>